<protein>
    <recommendedName>
        <fullName evidence="1">Replication initiation control protein YabA</fullName>
    </recommendedName>
</protein>
<evidence type="ECO:0000255" key="1">
    <source>
        <dbReference type="HAMAP-Rule" id="MF_01159"/>
    </source>
</evidence>
<evidence type="ECO:0000305" key="2"/>
<dbReference type="EMBL" id="AE015929">
    <property type="protein sequence ID" value="AAO05939.1"/>
    <property type="status" value="ALT_INIT"/>
    <property type="molecule type" value="Genomic_DNA"/>
</dbReference>
<dbReference type="RefSeq" id="NP_765852.2">
    <property type="nucleotide sequence ID" value="NC_004461.1"/>
</dbReference>
<dbReference type="RefSeq" id="WP_001832238.1">
    <property type="nucleotide sequence ID" value="NZ_WBME01000023.1"/>
</dbReference>
<dbReference type="SMR" id="Q8CQT9"/>
<dbReference type="DNASU" id="1056936"/>
<dbReference type="GeneID" id="50019603"/>
<dbReference type="KEGG" id="sep:SE_2297"/>
<dbReference type="PATRIC" id="fig|176280.10.peg.2240"/>
<dbReference type="eggNOG" id="COG4467">
    <property type="taxonomic scope" value="Bacteria"/>
</dbReference>
<dbReference type="HOGENOM" id="CLU_157169_1_0_9"/>
<dbReference type="OrthoDB" id="2112130at2"/>
<dbReference type="Proteomes" id="UP000001411">
    <property type="component" value="Chromosome"/>
</dbReference>
<dbReference type="GO" id="GO:0009295">
    <property type="term" value="C:nucleoid"/>
    <property type="evidence" value="ECO:0007669"/>
    <property type="project" value="UniProtKB-SubCell"/>
</dbReference>
<dbReference type="GO" id="GO:0006260">
    <property type="term" value="P:DNA replication"/>
    <property type="evidence" value="ECO:0007669"/>
    <property type="project" value="UniProtKB-UniRule"/>
</dbReference>
<dbReference type="HAMAP" id="MF_01159">
    <property type="entry name" value="YabA"/>
    <property type="match status" value="1"/>
</dbReference>
<dbReference type="InterPro" id="IPR010377">
    <property type="entry name" value="YabA"/>
</dbReference>
<dbReference type="NCBIfam" id="NF009641">
    <property type="entry name" value="PRK13169.1-2"/>
    <property type="match status" value="1"/>
</dbReference>
<dbReference type="Pfam" id="PF06156">
    <property type="entry name" value="YabA"/>
    <property type="match status" value="1"/>
</dbReference>
<dbReference type="PIRSF" id="PIRSF021439">
    <property type="entry name" value="DUF972"/>
    <property type="match status" value="1"/>
</dbReference>
<dbReference type="SUPFAM" id="SSF90257">
    <property type="entry name" value="Myosin rod fragments"/>
    <property type="match status" value="1"/>
</dbReference>
<name>YABA_STAES</name>
<proteinExistence type="inferred from homology"/>
<organism>
    <name type="scientific">Staphylococcus epidermidis (strain ATCC 12228 / FDA PCI 1200)</name>
    <dbReference type="NCBI Taxonomy" id="176280"/>
    <lineage>
        <taxon>Bacteria</taxon>
        <taxon>Bacillati</taxon>
        <taxon>Bacillota</taxon>
        <taxon>Bacilli</taxon>
        <taxon>Bacillales</taxon>
        <taxon>Staphylococcaceae</taxon>
        <taxon>Staphylococcus</taxon>
    </lineage>
</organism>
<keyword id="KW-0963">Cytoplasm</keyword>
<keyword id="KW-0235">DNA replication</keyword>
<keyword id="KW-0236">DNA replication inhibitor</keyword>
<keyword id="KW-0479">Metal-binding</keyword>
<keyword id="KW-0862">Zinc</keyword>
<reference key="1">
    <citation type="journal article" date="2003" name="Mol. Microbiol.">
        <title>Genome-based analysis of virulence genes in a non-biofilm-forming Staphylococcus epidermidis strain (ATCC 12228).</title>
        <authorList>
            <person name="Zhang Y.-Q."/>
            <person name="Ren S.-X."/>
            <person name="Li H.-L."/>
            <person name="Wang Y.-X."/>
            <person name="Fu G."/>
            <person name="Yang J."/>
            <person name="Qin Z.-Q."/>
            <person name="Miao Y.-G."/>
            <person name="Wang W.-Y."/>
            <person name="Chen R.-S."/>
            <person name="Shen Y."/>
            <person name="Chen Z."/>
            <person name="Yuan Z.-H."/>
            <person name="Zhao G.-P."/>
            <person name="Qu D."/>
            <person name="Danchin A."/>
            <person name="Wen Y.-M."/>
        </authorList>
    </citation>
    <scope>NUCLEOTIDE SEQUENCE [LARGE SCALE GENOMIC DNA]</scope>
    <source>
        <strain>ATCC 12228 / FDA PCI 1200</strain>
    </source>
</reference>
<accession>Q8CQT9</accession>
<feature type="chain" id="PRO_0000211921" description="Replication initiation control protein YabA">
    <location>
        <begin position="1"/>
        <end position="115"/>
    </location>
</feature>
<feature type="binding site" evidence="1">
    <location>
        <position position="90"/>
    </location>
    <ligand>
        <name>Zn(2+)</name>
        <dbReference type="ChEBI" id="CHEBI:29105"/>
    </ligand>
</feature>
<feature type="binding site" evidence="1">
    <location>
        <position position="92"/>
    </location>
    <ligand>
        <name>Zn(2+)</name>
        <dbReference type="ChEBI" id="CHEBI:29105"/>
    </ligand>
</feature>
<feature type="binding site" evidence="1">
    <location>
        <position position="106"/>
    </location>
    <ligand>
        <name>Zn(2+)</name>
        <dbReference type="ChEBI" id="CHEBI:29105"/>
    </ligand>
</feature>
<feature type="binding site" evidence="1">
    <location>
        <position position="109"/>
    </location>
    <ligand>
        <name>Zn(2+)</name>
        <dbReference type="ChEBI" id="CHEBI:29105"/>
    </ligand>
</feature>
<sequence length="115" mass="13478">MNRNELFERLMKLEHHVEQLTTDMSELKDLTVELVEENVALQVENENLKRLMNKTEESVETHLDKDNYKHVKTPSPSKDNLAMLYREGFHICKGELFGKHRHGEDCLLCLNVLSD</sequence>
<gene>
    <name evidence="1" type="primary">yabA</name>
    <name type="ordered locus">SE_2297</name>
</gene>
<comment type="function">
    <text evidence="1">Involved in control of chromosome replication initiation. Inhibits the cooperative binding of DnaA to the oriC region, thus negatively regulating initiation of chromosome replication. Inhibits the ability of DnaA-ATP to form a helix on DNA; does not disassemble preformed DnaA-DNA helices. Decreases the residence time of DnaA on the chromosome at its binding sites (oriC, replication forks and promoter-binding sites). Tethers DnaA to the replication machinery via the DNA polymerase beta sliding clamp subunit (dnaN). Associates with oriC and other DnaA targets on the chromosome in a DnaA-dependent manner.</text>
</comment>
<comment type="cofactor">
    <cofactor evidence="1">
        <name>Zn(2+)</name>
        <dbReference type="ChEBI" id="CHEBI:29105"/>
    </cofactor>
    <text evidence="1">Binds 1 zinc ion per subunit.</text>
</comment>
<comment type="subunit">
    <text evidence="1">Homotetramer. Interacts with both DnaA and DnaN, acting as a bridge between these two proteins.</text>
</comment>
<comment type="subcellular location">
    <subcellularLocation>
        <location evidence="1">Cytoplasm</location>
        <location evidence="1">Nucleoid</location>
    </subcellularLocation>
    <text evidence="1">Localizes in tight foci, which correspond to the replisome at mid-cell throughout the cell cycle.</text>
</comment>
<comment type="similarity">
    <text evidence="1">Belongs to the YabA family.</text>
</comment>
<comment type="sequence caution" evidence="2">
    <conflict type="erroneous initiation">
        <sequence resource="EMBL-CDS" id="AAO05939"/>
    </conflict>
</comment>